<reference key="1">
    <citation type="journal article" date="1998" name="Mol. Microbiol.">
        <title>Destabilized inheritance of pSC101 and other Escherichia coli plasmids by DpiA, a novel two-component system regulator.</title>
        <authorList>
            <person name="Ingmer H."/>
            <person name="Miller C.A."/>
            <person name="Cohen S.N."/>
        </authorList>
    </citation>
    <scope>NUCLEOTIDE SEQUENCE [GENOMIC DNA]</scope>
    <scope>CHARACTERIZATION</scope>
    <source>
        <strain>K12 / MG1655 / ATCC 47076</strain>
    </source>
</reference>
<reference key="2">
    <citation type="journal article" date="1996" name="DNA Res.">
        <title>A 718-kb DNA sequence of the Escherichia coli K-12 genome corresponding to the 12.7-28.0 min region on the linkage map.</title>
        <authorList>
            <person name="Oshima T."/>
            <person name="Aiba H."/>
            <person name="Baba T."/>
            <person name="Fujita K."/>
            <person name="Hayashi K."/>
            <person name="Honjo A."/>
            <person name="Ikemoto K."/>
            <person name="Inada T."/>
            <person name="Itoh T."/>
            <person name="Kajihara M."/>
            <person name="Kanai K."/>
            <person name="Kashimoto K."/>
            <person name="Kimura S."/>
            <person name="Kitagawa M."/>
            <person name="Makino K."/>
            <person name="Masuda S."/>
            <person name="Miki T."/>
            <person name="Mizobuchi K."/>
            <person name="Mori H."/>
            <person name="Motomura K."/>
            <person name="Nakamura Y."/>
            <person name="Nashimoto H."/>
            <person name="Nishio Y."/>
            <person name="Saito N."/>
            <person name="Sampei G."/>
            <person name="Seki Y."/>
            <person name="Tagami H."/>
            <person name="Takemoto K."/>
            <person name="Wada C."/>
            <person name="Yamamoto Y."/>
            <person name="Yano M."/>
            <person name="Horiuchi T."/>
        </authorList>
    </citation>
    <scope>NUCLEOTIDE SEQUENCE [LARGE SCALE GENOMIC DNA]</scope>
    <source>
        <strain>K12 / W3110 / ATCC 27325 / DSM 5911</strain>
    </source>
</reference>
<reference key="3">
    <citation type="submission" date="1997-01" db="EMBL/GenBank/DDBJ databases">
        <title>Sequence of minutes 4-25 of Escherichia coli.</title>
        <authorList>
            <person name="Chung E."/>
            <person name="Allen E."/>
            <person name="Araujo R."/>
            <person name="Aparicio A.M."/>
            <person name="Davis K."/>
            <person name="Duncan M."/>
            <person name="Federspiel N."/>
            <person name="Hyman R."/>
            <person name="Kalman S."/>
            <person name="Komp C."/>
            <person name="Kurdi O."/>
            <person name="Lew H."/>
            <person name="Lin D."/>
            <person name="Namath A."/>
            <person name="Oefner P."/>
            <person name="Roberts D."/>
            <person name="Schramm S."/>
            <person name="Davis R.W."/>
        </authorList>
    </citation>
    <scope>NUCLEOTIDE SEQUENCE [LARGE SCALE GENOMIC DNA]</scope>
    <source>
        <strain>K12 / MG1655 / ATCC 47076</strain>
    </source>
</reference>
<reference key="4">
    <citation type="journal article" date="1997" name="Science">
        <title>The complete genome sequence of Escherichia coli K-12.</title>
        <authorList>
            <person name="Blattner F.R."/>
            <person name="Plunkett G. III"/>
            <person name="Bloch C.A."/>
            <person name="Perna N.T."/>
            <person name="Burland V."/>
            <person name="Riley M."/>
            <person name="Collado-Vides J."/>
            <person name="Glasner J.D."/>
            <person name="Rode C.K."/>
            <person name="Mayhew G.F."/>
            <person name="Gregor J."/>
            <person name="Davis N.W."/>
            <person name="Kirkpatrick H.A."/>
            <person name="Goeden M.A."/>
            <person name="Rose D.J."/>
            <person name="Mau B."/>
            <person name="Shao Y."/>
        </authorList>
    </citation>
    <scope>NUCLEOTIDE SEQUENCE [LARGE SCALE GENOMIC DNA]</scope>
    <source>
        <strain>K12 / MG1655 / ATCC 47076</strain>
    </source>
</reference>
<reference key="5">
    <citation type="journal article" date="2006" name="Mol. Syst. Biol.">
        <title>Highly accurate genome sequences of Escherichia coli K-12 strains MG1655 and W3110.</title>
        <authorList>
            <person name="Hayashi K."/>
            <person name="Morooka N."/>
            <person name="Yamamoto Y."/>
            <person name="Fujita K."/>
            <person name="Isono K."/>
            <person name="Choi S."/>
            <person name="Ohtsubo E."/>
            <person name="Baba T."/>
            <person name="Wanner B.L."/>
            <person name="Mori H."/>
            <person name="Horiuchi T."/>
        </authorList>
    </citation>
    <scope>NUCLEOTIDE SEQUENCE [LARGE SCALE GENOMIC DNA]</scope>
    <source>
        <strain>K12 / W3110 / ATCC 27325 / DSM 5911</strain>
    </source>
</reference>
<reference key="6">
    <citation type="journal article" date="2008" name="Biosci. Biotechnol. Biochem.">
        <title>Anaerobic regulation of citrate fermentation by CitAB in Escherichia coli.</title>
        <authorList>
            <person name="Yamamoto K."/>
            <person name="Matsumoto F."/>
            <person name="Oshima T."/>
            <person name="Fujita N."/>
            <person name="Ogasawara N."/>
            <person name="Ishihama A."/>
        </authorList>
    </citation>
    <scope>FUNCTION</scope>
</reference>
<reference key="7">
    <citation type="journal article" date="2009" name="Biosci. Biotechnol. Biochem.">
        <title>Characterization of CitA-CitB signal transduction activating genes involved in anaerobic citrate catabolism in Escherichia coli.</title>
        <authorList>
            <person name="Yamamoto K."/>
            <person name="Matsumoto F."/>
            <person name="Minagawa S."/>
            <person name="Oshima T."/>
            <person name="Fujita N."/>
            <person name="Ogasawara N."/>
            <person name="Ishihama A."/>
        </authorList>
    </citation>
    <scope>FUNCTION</scope>
    <scope>PHOSPHORYLATION</scope>
    <scope>DNA-BINDING</scope>
</reference>
<keyword id="KW-0010">Activator</keyword>
<keyword id="KW-0963">Cytoplasm</keyword>
<keyword id="KW-0238">DNA-binding</keyword>
<keyword id="KW-0597">Phosphoprotein</keyword>
<keyword id="KW-1185">Reference proteome</keyword>
<keyword id="KW-0804">Transcription</keyword>
<keyword id="KW-0805">Transcription regulation</keyword>
<keyword id="KW-0902">Two-component regulatory system</keyword>
<feature type="chain" id="PRO_0000081068" description="Transcriptional regulatory protein DpiA">
    <location>
        <begin position="1"/>
        <end position="226"/>
    </location>
</feature>
<feature type="domain" description="Response regulatory" evidence="2">
    <location>
        <begin position="6"/>
        <end position="122"/>
    </location>
</feature>
<feature type="DNA-binding region" description="H-T-H motif" evidence="1">
    <location>
        <begin position="180"/>
        <end position="199"/>
    </location>
</feature>
<feature type="modified residue" description="4-aspartylphosphate" evidence="2">
    <location>
        <position position="57"/>
    </location>
</feature>
<name>DPIA_ECOLI</name>
<comment type="function">
    <text evidence="3 4">Member of the two-component regulatory system DpiA/DpiB, which is essential for expression of citrate-specific fermentation genes and genes involved in plasmid inheritance. Could be involved in response to both the presence of citrate and external redox conditions. Regulates the transcription of citCDEFXGT, dpiAB, mdh and exuT. Binds specifically to the dpiB-citC intergenic region.</text>
</comment>
<comment type="interaction">
    <interactant intactId="EBI-1119284">
        <id>P0AEF4</id>
    </interactant>
    <interactant intactId="EBI-1131666">
        <id>P76079</id>
        <label>paaC</label>
    </interactant>
    <organismsDiffer>false</organismsDiffer>
    <experiments>4</experiments>
</comment>
<comment type="interaction">
    <interactant intactId="EBI-1119284">
        <id>P0AEF4</id>
    </interactant>
    <interactant intactId="EBI-9132384">
        <id>P39409</id>
        <label>yjjW</label>
    </interactant>
    <organismsDiffer>false</organismsDiffer>
    <experiments>2</experiments>
</comment>
<comment type="subcellular location">
    <subcellularLocation>
        <location evidence="5">Cytoplasm</location>
    </subcellularLocation>
</comment>
<comment type="PTM">
    <text evidence="4">Phosphorylated and activated by DpiB.</text>
</comment>
<protein>
    <recommendedName>
        <fullName>Transcriptional regulatory protein DpiA</fullName>
    </recommendedName>
    <alternativeName>
        <fullName>Destabilizer of plasmid inheritance</fullName>
    </alternativeName>
</protein>
<dbReference type="EMBL" id="U46667">
    <property type="protein sequence ID" value="AAC28952.1"/>
    <property type="molecule type" value="Genomic_DNA"/>
</dbReference>
<dbReference type="EMBL" id="U82598">
    <property type="protein sequence ID" value="AAB40820.1"/>
    <property type="molecule type" value="Genomic_DNA"/>
</dbReference>
<dbReference type="EMBL" id="U00096">
    <property type="protein sequence ID" value="AAC73721.1"/>
    <property type="molecule type" value="Genomic_DNA"/>
</dbReference>
<dbReference type="EMBL" id="AP009048">
    <property type="protein sequence ID" value="BAA35256.1"/>
    <property type="molecule type" value="Genomic_DNA"/>
</dbReference>
<dbReference type="PIR" id="B64796">
    <property type="entry name" value="B64796"/>
</dbReference>
<dbReference type="RefSeq" id="NP_415153.1">
    <property type="nucleotide sequence ID" value="NC_000913.3"/>
</dbReference>
<dbReference type="RefSeq" id="WP_000126500.1">
    <property type="nucleotide sequence ID" value="NZ_STEB01000031.1"/>
</dbReference>
<dbReference type="SMR" id="P0AEF4"/>
<dbReference type="BioGRID" id="4263364">
    <property type="interactions" value="97"/>
</dbReference>
<dbReference type="BioGRID" id="851347">
    <property type="interactions" value="8"/>
</dbReference>
<dbReference type="DIP" id="DIP-47831N"/>
<dbReference type="FunCoup" id="P0AEF4">
    <property type="interactions" value="340"/>
</dbReference>
<dbReference type="IntAct" id="P0AEF4">
    <property type="interactions" value="15"/>
</dbReference>
<dbReference type="STRING" id="511145.b0620"/>
<dbReference type="iPTMnet" id="P0AEF4"/>
<dbReference type="jPOST" id="P0AEF4"/>
<dbReference type="PaxDb" id="511145-b0620"/>
<dbReference type="EnsemblBacteria" id="AAC73721">
    <property type="protein sequence ID" value="AAC73721"/>
    <property type="gene ID" value="b0620"/>
</dbReference>
<dbReference type="GeneID" id="75205018"/>
<dbReference type="GeneID" id="947008"/>
<dbReference type="KEGG" id="ecj:JW0612"/>
<dbReference type="KEGG" id="eco:b0620"/>
<dbReference type="KEGG" id="ecoc:C3026_03100"/>
<dbReference type="PATRIC" id="fig|511145.12.peg.650"/>
<dbReference type="EchoBASE" id="EB3314"/>
<dbReference type="eggNOG" id="COG4565">
    <property type="taxonomic scope" value="Bacteria"/>
</dbReference>
<dbReference type="HOGENOM" id="CLU_000445_39_0_6"/>
<dbReference type="InParanoid" id="P0AEF4"/>
<dbReference type="OMA" id="PEHRYVW"/>
<dbReference type="OrthoDB" id="9802426at2"/>
<dbReference type="PhylomeDB" id="P0AEF4"/>
<dbReference type="BioCyc" id="EcoCyc:G6346-MONOMER"/>
<dbReference type="PRO" id="PR:P0AEF4"/>
<dbReference type="Proteomes" id="UP000000625">
    <property type="component" value="Chromosome"/>
</dbReference>
<dbReference type="GO" id="GO:0005737">
    <property type="term" value="C:cytoplasm"/>
    <property type="evidence" value="ECO:0007669"/>
    <property type="project" value="UniProtKB-SubCell"/>
</dbReference>
<dbReference type="GO" id="GO:0003677">
    <property type="term" value="F:DNA binding"/>
    <property type="evidence" value="ECO:0007669"/>
    <property type="project" value="UniProtKB-KW"/>
</dbReference>
<dbReference type="GO" id="GO:0003700">
    <property type="term" value="F:DNA-binding transcription factor activity"/>
    <property type="evidence" value="ECO:0007669"/>
    <property type="project" value="InterPro"/>
</dbReference>
<dbReference type="GO" id="GO:0000156">
    <property type="term" value="F:phosphorelay response regulator activity"/>
    <property type="evidence" value="ECO:0000314"/>
    <property type="project" value="EcoCyc"/>
</dbReference>
<dbReference type="GO" id="GO:0000160">
    <property type="term" value="P:phosphorelay signal transduction system"/>
    <property type="evidence" value="ECO:0000314"/>
    <property type="project" value="EcoCyc"/>
</dbReference>
<dbReference type="CDD" id="cd19925">
    <property type="entry name" value="REC_citrate_TCS"/>
    <property type="match status" value="1"/>
</dbReference>
<dbReference type="FunFam" id="3.40.50.2300:FF:000057">
    <property type="entry name" value="Transcriptional regulatory protein"/>
    <property type="match status" value="1"/>
</dbReference>
<dbReference type="Gene3D" id="3.40.50.2300">
    <property type="match status" value="1"/>
</dbReference>
<dbReference type="InterPro" id="IPR051271">
    <property type="entry name" value="2C-system_Tx_regulators"/>
</dbReference>
<dbReference type="InterPro" id="IPR011006">
    <property type="entry name" value="CheY-like_superfamily"/>
</dbReference>
<dbReference type="InterPro" id="IPR048714">
    <property type="entry name" value="DpiA-like_HTH"/>
</dbReference>
<dbReference type="InterPro" id="IPR024187">
    <property type="entry name" value="Sig_transdc_resp-reg_cit/mal"/>
</dbReference>
<dbReference type="InterPro" id="IPR001789">
    <property type="entry name" value="Sig_transdc_resp-reg_receiver"/>
</dbReference>
<dbReference type="NCBIfam" id="NF007467">
    <property type="entry name" value="PRK10046.1"/>
    <property type="match status" value="1"/>
</dbReference>
<dbReference type="PANTHER" id="PTHR45526:SF1">
    <property type="entry name" value="TRANSCRIPTIONAL REGULATORY PROTEIN DCUR-RELATED"/>
    <property type="match status" value="1"/>
</dbReference>
<dbReference type="PANTHER" id="PTHR45526">
    <property type="entry name" value="TRANSCRIPTIONAL REGULATORY PROTEIN DPIA"/>
    <property type="match status" value="1"/>
</dbReference>
<dbReference type="Pfam" id="PF20714">
    <property type="entry name" value="HTH_64"/>
    <property type="match status" value="1"/>
</dbReference>
<dbReference type="Pfam" id="PF00072">
    <property type="entry name" value="Response_reg"/>
    <property type="match status" value="1"/>
</dbReference>
<dbReference type="PIRSF" id="PIRSF006171">
    <property type="entry name" value="RR_citrat_malat"/>
    <property type="match status" value="1"/>
</dbReference>
<dbReference type="SMART" id="SM00448">
    <property type="entry name" value="REC"/>
    <property type="match status" value="1"/>
</dbReference>
<dbReference type="SUPFAM" id="SSF52172">
    <property type="entry name" value="CheY-like"/>
    <property type="match status" value="1"/>
</dbReference>
<dbReference type="PROSITE" id="PS50110">
    <property type="entry name" value="RESPONSE_REGULATORY"/>
    <property type="match status" value="1"/>
</dbReference>
<evidence type="ECO:0000250" key="1"/>
<evidence type="ECO:0000255" key="2">
    <source>
        <dbReference type="PROSITE-ProRule" id="PRU00169"/>
    </source>
</evidence>
<evidence type="ECO:0000269" key="3">
    <source>
    </source>
</evidence>
<evidence type="ECO:0000269" key="4">
    <source>
    </source>
</evidence>
<evidence type="ECO:0000305" key="5"/>
<organism>
    <name type="scientific">Escherichia coli (strain K12)</name>
    <dbReference type="NCBI Taxonomy" id="83333"/>
    <lineage>
        <taxon>Bacteria</taxon>
        <taxon>Pseudomonadati</taxon>
        <taxon>Pseudomonadota</taxon>
        <taxon>Gammaproteobacteria</taxon>
        <taxon>Enterobacterales</taxon>
        <taxon>Enterobacteriaceae</taxon>
        <taxon>Escherichia</taxon>
    </lineage>
</organism>
<gene>
    <name type="primary">dpiA</name>
    <name type="synonym">citB</name>
    <name type="synonym">criR</name>
    <name type="synonym">mpdA</name>
    <name type="ordered locus">b0620</name>
    <name type="ordered locus">JW0612</name>
</gene>
<accession>P0AEF4</accession>
<accession>Q54149</accession>
<proteinExistence type="evidence at protein level"/>
<sequence>MTAPLTLLIVEDETPLAEMHAEYIRHIPGFSQILLAGNLAQARMMIERFKPGLILLDNYLPDGRGINLLHELVQAHYPGDVVFTTAASDMETVSEAVRCGVFDYLIKPIAYERLGQTLTRFRQRKHMLESIDSASQKQIDEMFNAYARGEPKDELPTGIDPLTLNAVRKLFKEPGVQHTAETVAQALTISRTTARRYLEYCASRHLIIAEIVHGKVGRPQRIYHSG</sequence>